<name>TSGA_YERP3</name>
<protein>
    <recommendedName>
        <fullName evidence="1">Protein TsgA homolog</fullName>
    </recommendedName>
</protein>
<accession>A7FNS4</accession>
<sequence>MNNSNRIRLTWISYLSYALTGALVIVTGIVMGNIAEYFNLPIASMSNTFTFLNAGILISIFLNAWLMEIIPLKRQLVFGFILMLIAIAGLMVGHNLMIFSISMFIFGVVSGITMSIGTFLVTHMYEGRQRGSRLLFTDSFFSMAGMIFPIAAAMLLARHIEWYWVYACIGLLYVGIFVLTLCSEFPVLGHKATDQSKPVVKEKWGVGVLFLAIAALCYILGQLGFIQWVPEYATKTFNMNISQAGQLVSNFWISYMIGMWIFSFILRFFDLQRIVTVLAAMATLAMYLFVSTDNPAYLSYYILALGFVSSAIYTTLITLGSLQTKVSSPKLVNFILTCGTVGTMLTFVVTGPIVANNGVHAALATANGLYLAVFILCLALGFFTKHRSHGHVTH</sequence>
<comment type="subcellular location">
    <subcellularLocation>
        <location evidence="1">Cell inner membrane</location>
        <topology evidence="1">Multi-pass membrane protein</topology>
    </subcellularLocation>
</comment>
<comment type="similarity">
    <text evidence="1">Belongs to the major facilitator superfamily. TsgA family.</text>
</comment>
<gene>
    <name evidence="1" type="primary">tsgA</name>
    <name type="ordered locus">YpsIP31758_3954</name>
</gene>
<keyword id="KW-0997">Cell inner membrane</keyword>
<keyword id="KW-1003">Cell membrane</keyword>
<keyword id="KW-0472">Membrane</keyword>
<keyword id="KW-0812">Transmembrane</keyword>
<keyword id="KW-1133">Transmembrane helix</keyword>
<reference key="1">
    <citation type="journal article" date="2007" name="PLoS Genet.">
        <title>The complete genome sequence of Yersinia pseudotuberculosis IP31758, the causative agent of Far East scarlet-like fever.</title>
        <authorList>
            <person name="Eppinger M."/>
            <person name="Rosovitz M.J."/>
            <person name="Fricke W.F."/>
            <person name="Rasko D.A."/>
            <person name="Kokorina G."/>
            <person name="Fayolle C."/>
            <person name="Lindler L.E."/>
            <person name="Carniel E."/>
            <person name="Ravel J."/>
        </authorList>
    </citation>
    <scope>NUCLEOTIDE SEQUENCE [LARGE SCALE GENOMIC DNA]</scope>
    <source>
        <strain>IP 31758</strain>
    </source>
</reference>
<organism>
    <name type="scientific">Yersinia pseudotuberculosis serotype O:1b (strain IP 31758)</name>
    <dbReference type="NCBI Taxonomy" id="349747"/>
    <lineage>
        <taxon>Bacteria</taxon>
        <taxon>Pseudomonadati</taxon>
        <taxon>Pseudomonadota</taxon>
        <taxon>Gammaproteobacteria</taxon>
        <taxon>Enterobacterales</taxon>
        <taxon>Yersiniaceae</taxon>
        <taxon>Yersinia</taxon>
    </lineage>
</organism>
<dbReference type="EMBL" id="CP000720">
    <property type="protein sequence ID" value="ABS49780.1"/>
    <property type="molecule type" value="Genomic_DNA"/>
</dbReference>
<dbReference type="RefSeq" id="WP_011193229.1">
    <property type="nucleotide sequence ID" value="NC_009708.1"/>
</dbReference>
<dbReference type="SMR" id="A7FNS4"/>
<dbReference type="KEGG" id="ypi:YpsIP31758_3954"/>
<dbReference type="HOGENOM" id="CLU_056916_0_0_6"/>
<dbReference type="Proteomes" id="UP000002412">
    <property type="component" value="Chromosome"/>
</dbReference>
<dbReference type="GO" id="GO:0005886">
    <property type="term" value="C:plasma membrane"/>
    <property type="evidence" value="ECO:0007669"/>
    <property type="project" value="UniProtKB-SubCell"/>
</dbReference>
<dbReference type="GO" id="GO:0022857">
    <property type="term" value="F:transmembrane transporter activity"/>
    <property type="evidence" value="ECO:0007669"/>
    <property type="project" value="InterPro"/>
</dbReference>
<dbReference type="Gene3D" id="1.20.1250.20">
    <property type="entry name" value="MFS general substrate transporter like domains"/>
    <property type="match status" value="2"/>
</dbReference>
<dbReference type="HAMAP" id="MF_01044">
    <property type="entry name" value="MFS_TsgA"/>
    <property type="match status" value="1"/>
</dbReference>
<dbReference type="InterPro" id="IPR011701">
    <property type="entry name" value="MFS"/>
</dbReference>
<dbReference type="InterPro" id="IPR020846">
    <property type="entry name" value="MFS_dom"/>
</dbReference>
<dbReference type="InterPro" id="IPR036259">
    <property type="entry name" value="MFS_trans_sf"/>
</dbReference>
<dbReference type="InterPro" id="IPR023528">
    <property type="entry name" value="MFS_TsgA"/>
</dbReference>
<dbReference type="InterPro" id="IPR050375">
    <property type="entry name" value="MFS_TsgA-like"/>
</dbReference>
<dbReference type="NCBIfam" id="NF002982">
    <property type="entry name" value="PRK03699.1"/>
    <property type="match status" value="1"/>
</dbReference>
<dbReference type="PANTHER" id="PTHR43702">
    <property type="entry name" value="L-FUCOSE-PROTON SYMPORTER"/>
    <property type="match status" value="1"/>
</dbReference>
<dbReference type="PANTHER" id="PTHR43702:SF3">
    <property type="entry name" value="PROTEIN TSGA"/>
    <property type="match status" value="1"/>
</dbReference>
<dbReference type="Pfam" id="PF07690">
    <property type="entry name" value="MFS_1"/>
    <property type="match status" value="1"/>
</dbReference>
<dbReference type="SUPFAM" id="SSF103473">
    <property type="entry name" value="MFS general substrate transporter"/>
    <property type="match status" value="1"/>
</dbReference>
<dbReference type="PROSITE" id="PS50850">
    <property type="entry name" value="MFS"/>
    <property type="match status" value="1"/>
</dbReference>
<proteinExistence type="inferred from homology"/>
<evidence type="ECO:0000255" key="1">
    <source>
        <dbReference type="HAMAP-Rule" id="MF_01044"/>
    </source>
</evidence>
<feature type="chain" id="PRO_1000064257" description="Protein TsgA homolog">
    <location>
        <begin position="1"/>
        <end position="394"/>
    </location>
</feature>
<feature type="transmembrane region" description="Helical" evidence="1">
    <location>
        <begin position="11"/>
        <end position="31"/>
    </location>
</feature>
<feature type="transmembrane region" description="Helical" evidence="1">
    <location>
        <begin position="51"/>
        <end position="71"/>
    </location>
</feature>
<feature type="transmembrane region" description="Helical" evidence="1">
    <location>
        <begin position="76"/>
        <end position="96"/>
    </location>
</feature>
<feature type="transmembrane region" description="Helical" evidence="1">
    <location>
        <begin position="101"/>
        <end position="121"/>
    </location>
</feature>
<feature type="transmembrane region" description="Helical" evidence="1">
    <location>
        <begin position="134"/>
        <end position="154"/>
    </location>
</feature>
<feature type="transmembrane region" description="Helical" evidence="1">
    <location>
        <begin position="162"/>
        <end position="182"/>
    </location>
</feature>
<feature type="transmembrane region" description="Helical" evidence="1">
    <location>
        <begin position="206"/>
        <end position="226"/>
    </location>
</feature>
<feature type="transmembrane region" description="Helical" evidence="1">
    <location>
        <begin position="246"/>
        <end position="266"/>
    </location>
</feature>
<feature type="transmembrane region" description="Helical" evidence="1">
    <location>
        <begin position="274"/>
        <end position="294"/>
    </location>
</feature>
<feature type="transmembrane region" description="Helical" evidence="1">
    <location>
        <begin position="302"/>
        <end position="322"/>
    </location>
</feature>
<feature type="transmembrane region" description="Helical" evidence="1">
    <location>
        <begin position="334"/>
        <end position="354"/>
    </location>
</feature>
<feature type="transmembrane region" description="Helical" evidence="1">
    <location>
        <begin position="363"/>
        <end position="383"/>
    </location>
</feature>